<gene>
    <name evidence="1" type="primary">uvrC</name>
    <name type="ordered locus">PGN_1938</name>
</gene>
<sequence>MMTRDELNIILPTLPEKPGCYQYFDEDGKVIYVGKAKNLRRRVSSYFYKEHADRKTRILVRQIRSIKYIVVDSEGDALLLENSLIKEYQPRYNVLLKDGKTYPSIVIKREPFPRIFATRDIKKDGSEYFGPYPGALIAKGMLRLVKEIYPIRTCKLDLREEKIRQGRYRVCLQYHIKKCKGPCIGNQTSNEYESNVSEIRDLLRGNLHRLVRMYRDRMQAYSEELRFEEAQICKERIELLERYEAKHTVVPRNIDNVDVFSYDEDEHTAYINYMHIEHGGINRVYTLEYRKQIEESKEELLAAAITELRQRFESNAHEIVLPFDTGWQTGESITTTIPRRGDKRKLLELSEKNVAQYKLDKLKRAEKLNPEQRALHIVHGIQKDLHLDRPPKHIECFDNSNIQGTSPVAACVVFKMGKPSKKDYRKFHVKTVEGPNDFASMREIISRHYTRLTEENLPLPDLIVVDGGKGQLSAAYETLDKLGLIGKIPIIGLAERLEEIFFPKDPVPLILDKKSETLKVIQHLRDEAHRFGIGFHRDVRSKKQIQSELDNIKGIGKKTKEDLLRHFKSVKRIRSAEEEELSALIGRNKAKLLYEGLRKK</sequence>
<proteinExistence type="inferred from homology"/>
<accession>B2RM62</accession>
<protein>
    <recommendedName>
        <fullName evidence="1">UvrABC system protein C</fullName>
        <shortName evidence="1">Protein UvrC</shortName>
    </recommendedName>
    <alternativeName>
        <fullName evidence="1">Excinuclease ABC subunit C</fullName>
    </alternativeName>
</protein>
<keyword id="KW-0963">Cytoplasm</keyword>
<keyword id="KW-0227">DNA damage</keyword>
<keyword id="KW-0228">DNA excision</keyword>
<keyword id="KW-0234">DNA repair</keyword>
<keyword id="KW-0267">Excision nuclease</keyword>
<keyword id="KW-0742">SOS response</keyword>
<reference key="1">
    <citation type="journal article" date="2008" name="DNA Res.">
        <title>Determination of the genome sequence of Porphyromonas gingivalis strain ATCC 33277 and genomic comparison with strain W83 revealed extensive genome rearrangements in P. gingivalis.</title>
        <authorList>
            <person name="Naito M."/>
            <person name="Hirakawa H."/>
            <person name="Yamashita A."/>
            <person name="Ohara N."/>
            <person name="Shoji M."/>
            <person name="Yukitake H."/>
            <person name="Nakayama K."/>
            <person name="Toh H."/>
            <person name="Yoshimura F."/>
            <person name="Kuhara S."/>
            <person name="Hattori M."/>
            <person name="Hayashi T."/>
            <person name="Nakayama K."/>
        </authorList>
    </citation>
    <scope>NUCLEOTIDE SEQUENCE [LARGE SCALE GENOMIC DNA]</scope>
    <source>
        <strain>ATCC 33277 / DSM 20709 / CIP 103683 / JCM 12257 / NCTC 11834 / 2561</strain>
    </source>
</reference>
<organism>
    <name type="scientific">Porphyromonas gingivalis (strain ATCC 33277 / DSM 20709 / CIP 103683 / JCM 12257 / NCTC 11834 / 2561)</name>
    <dbReference type="NCBI Taxonomy" id="431947"/>
    <lineage>
        <taxon>Bacteria</taxon>
        <taxon>Pseudomonadati</taxon>
        <taxon>Bacteroidota</taxon>
        <taxon>Bacteroidia</taxon>
        <taxon>Bacteroidales</taxon>
        <taxon>Porphyromonadaceae</taxon>
        <taxon>Porphyromonas</taxon>
    </lineage>
</organism>
<feature type="chain" id="PRO_1000099506" description="UvrABC system protein C">
    <location>
        <begin position="1"/>
        <end position="600"/>
    </location>
</feature>
<feature type="domain" description="GIY-YIG" evidence="1">
    <location>
        <begin position="16"/>
        <end position="94"/>
    </location>
</feature>
<feature type="domain" description="UVR" evidence="1">
    <location>
        <begin position="208"/>
        <end position="243"/>
    </location>
</feature>
<comment type="function">
    <text evidence="1">The UvrABC repair system catalyzes the recognition and processing of DNA lesions. UvrC both incises the 5' and 3' sides of the lesion. The N-terminal half is responsible for the 3' incision and the C-terminal half is responsible for the 5' incision.</text>
</comment>
<comment type="subunit">
    <text evidence="1">Interacts with UvrB in an incision complex.</text>
</comment>
<comment type="subcellular location">
    <subcellularLocation>
        <location evidence="1">Cytoplasm</location>
    </subcellularLocation>
</comment>
<comment type="similarity">
    <text evidence="1">Belongs to the UvrC family.</text>
</comment>
<dbReference type="EMBL" id="AP009380">
    <property type="protein sequence ID" value="BAG34457.1"/>
    <property type="molecule type" value="Genomic_DNA"/>
</dbReference>
<dbReference type="SMR" id="B2RM62"/>
<dbReference type="KEGG" id="pgn:PGN_1938"/>
<dbReference type="eggNOG" id="COG0322">
    <property type="taxonomic scope" value="Bacteria"/>
</dbReference>
<dbReference type="HOGENOM" id="CLU_014841_3_2_10"/>
<dbReference type="OrthoDB" id="9804933at2"/>
<dbReference type="BioCyc" id="PGIN431947:G1G2V-2173-MONOMER"/>
<dbReference type="Proteomes" id="UP000008842">
    <property type="component" value="Chromosome"/>
</dbReference>
<dbReference type="GO" id="GO:0005737">
    <property type="term" value="C:cytoplasm"/>
    <property type="evidence" value="ECO:0007669"/>
    <property type="project" value="UniProtKB-SubCell"/>
</dbReference>
<dbReference type="GO" id="GO:0009380">
    <property type="term" value="C:excinuclease repair complex"/>
    <property type="evidence" value="ECO:0007669"/>
    <property type="project" value="InterPro"/>
</dbReference>
<dbReference type="GO" id="GO:0003677">
    <property type="term" value="F:DNA binding"/>
    <property type="evidence" value="ECO:0007669"/>
    <property type="project" value="UniProtKB-UniRule"/>
</dbReference>
<dbReference type="GO" id="GO:0009381">
    <property type="term" value="F:excinuclease ABC activity"/>
    <property type="evidence" value="ECO:0007669"/>
    <property type="project" value="UniProtKB-UniRule"/>
</dbReference>
<dbReference type="GO" id="GO:0006289">
    <property type="term" value="P:nucleotide-excision repair"/>
    <property type="evidence" value="ECO:0007669"/>
    <property type="project" value="UniProtKB-UniRule"/>
</dbReference>
<dbReference type="GO" id="GO:0009432">
    <property type="term" value="P:SOS response"/>
    <property type="evidence" value="ECO:0007669"/>
    <property type="project" value="UniProtKB-UniRule"/>
</dbReference>
<dbReference type="CDD" id="cd10434">
    <property type="entry name" value="GIY-YIG_UvrC_Cho"/>
    <property type="match status" value="1"/>
</dbReference>
<dbReference type="FunFam" id="3.40.1440.10:FF:000001">
    <property type="entry name" value="UvrABC system protein C"/>
    <property type="match status" value="1"/>
</dbReference>
<dbReference type="Gene3D" id="1.10.150.20">
    <property type="entry name" value="5' to 3' exonuclease, C-terminal subdomain"/>
    <property type="match status" value="1"/>
</dbReference>
<dbReference type="Gene3D" id="3.40.1440.10">
    <property type="entry name" value="GIY-YIG endonuclease"/>
    <property type="match status" value="1"/>
</dbReference>
<dbReference type="Gene3D" id="3.30.420.340">
    <property type="entry name" value="UvrC, RNAse H endonuclease domain"/>
    <property type="match status" value="1"/>
</dbReference>
<dbReference type="HAMAP" id="MF_00203">
    <property type="entry name" value="UvrC"/>
    <property type="match status" value="1"/>
</dbReference>
<dbReference type="InterPro" id="IPR000305">
    <property type="entry name" value="GIY-YIG_endonuc"/>
</dbReference>
<dbReference type="InterPro" id="IPR035901">
    <property type="entry name" value="GIY-YIG_endonuc_sf"/>
</dbReference>
<dbReference type="InterPro" id="IPR047296">
    <property type="entry name" value="GIY-YIG_UvrC_Cho"/>
</dbReference>
<dbReference type="InterPro" id="IPR010994">
    <property type="entry name" value="RuvA_2-like"/>
</dbReference>
<dbReference type="InterPro" id="IPR036876">
    <property type="entry name" value="UVR_dom_sf"/>
</dbReference>
<dbReference type="InterPro" id="IPR050066">
    <property type="entry name" value="UvrABC_protein_C"/>
</dbReference>
<dbReference type="InterPro" id="IPR004791">
    <property type="entry name" value="UvrC"/>
</dbReference>
<dbReference type="InterPro" id="IPR001162">
    <property type="entry name" value="UvrC_RNase_H_dom"/>
</dbReference>
<dbReference type="InterPro" id="IPR038476">
    <property type="entry name" value="UvrC_RNase_H_dom_sf"/>
</dbReference>
<dbReference type="NCBIfam" id="TIGR00194">
    <property type="entry name" value="uvrC"/>
    <property type="match status" value="1"/>
</dbReference>
<dbReference type="PANTHER" id="PTHR30562:SF1">
    <property type="entry name" value="UVRABC SYSTEM PROTEIN C"/>
    <property type="match status" value="1"/>
</dbReference>
<dbReference type="PANTHER" id="PTHR30562">
    <property type="entry name" value="UVRC/OXIDOREDUCTASE"/>
    <property type="match status" value="1"/>
</dbReference>
<dbReference type="Pfam" id="PF01541">
    <property type="entry name" value="GIY-YIG"/>
    <property type="match status" value="1"/>
</dbReference>
<dbReference type="Pfam" id="PF14520">
    <property type="entry name" value="HHH_5"/>
    <property type="match status" value="1"/>
</dbReference>
<dbReference type="Pfam" id="PF22920">
    <property type="entry name" value="UvrC_RNaseH"/>
    <property type="match status" value="1"/>
</dbReference>
<dbReference type="Pfam" id="PF08459">
    <property type="entry name" value="UvrC_RNaseH_dom"/>
    <property type="match status" value="1"/>
</dbReference>
<dbReference type="SMART" id="SM00465">
    <property type="entry name" value="GIYc"/>
    <property type="match status" value="1"/>
</dbReference>
<dbReference type="SUPFAM" id="SSF46600">
    <property type="entry name" value="C-terminal UvrC-binding domain of UvrB"/>
    <property type="match status" value="1"/>
</dbReference>
<dbReference type="SUPFAM" id="SSF82771">
    <property type="entry name" value="GIY-YIG endonuclease"/>
    <property type="match status" value="1"/>
</dbReference>
<dbReference type="SUPFAM" id="SSF47781">
    <property type="entry name" value="RuvA domain 2-like"/>
    <property type="match status" value="1"/>
</dbReference>
<dbReference type="PROSITE" id="PS50164">
    <property type="entry name" value="GIY_YIG"/>
    <property type="match status" value="1"/>
</dbReference>
<dbReference type="PROSITE" id="PS50165">
    <property type="entry name" value="UVRC"/>
    <property type="match status" value="1"/>
</dbReference>
<name>UVRC_PORG3</name>
<evidence type="ECO:0000255" key="1">
    <source>
        <dbReference type="HAMAP-Rule" id="MF_00203"/>
    </source>
</evidence>